<proteinExistence type="evidence at transcript level"/>
<comment type="subcellular location">
    <subcellularLocation>
        <location evidence="5">Secreted</location>
    </subcellularLocation>
</comment>
<comment type="similarity">
    <text evidence="4">Belongs to the plant self-incompatibility (S1) protein family.</text>
</comment>
<gene>
    <name evidence="3" type="primary">SPH23</name>
    <name evidence="6" type="ordered locus">At3g26860</name>
    <name evidence="7" type="ORF">MDJ14.20</name>
</gene>
<evidence type="ECO:0000255" key="1"/>
<evidence type="ECO:0000255" key="2">
    <source>
        <dbReference type="PROSITE-ProRule" id="PRU00498"/>
    </source>
</evidence>
<evidence type="ECO:0000303" key="3">
    <source>
    </source>
</evidence>
<evidence type="ECO:0000305" key="4"/>
<evidence type="ECO:0000305" key="5">
    <source>
    </source>
</evidence>
<evidence type="ECO:0000312" key="6">
    <source>
        <dbReference type="Araport" id="AT3G26860"/>
    </source>
</evidence>
<evidence type="ECO:0000312" key="7">
    <source>
        <dbReference type="EMBL" id="BAB01233.1"/>
    </source>
</evidence>
<organism>
    <name type="scientific">Arabidopsis thaliana</name>
    <name type="common">Mouse-ear cress</name>
    <dbReference type="NCBI Taxonomy" id="3702"/>
    <lineage>
        <taxon>Eukaryota</taxon>
        <taxon>Viridiplantae</taxon>
        <taxon>Streptophyta</taxon>
        <taxon>Embryophyta</taxon>
        <taxon>Tracheophyta</taxon>
        <taxon>Spermatophyta</taxon>
        <taxon>Magnoliopsida</taxon>
        <taxon>eudicotyledons</taxon>
        <taxon>Gunneridae</taxon>
        <taxon>Pentapetalae</taxon>
        <taxon>rosids</taxon>
        <taxon>malvids</taxon>
        <taxon>Brassicales</taxon>
        <taxon>Brassicaceae</taxon>
        <taxon>Camelineae</taxon>
        <taxon>Arabidopsis</taxon>
    </lineage>
</organism>
<sequence length="122" mass="13958">MQNLSILLVCSFCILGHVSSAGIRIGNELKNKKLLWMRCYSKDDVIGPLIIPIGGHRFNYFGTNIFATTRFMCTLRQGPNYRHHQNFTAFKLYSASDDGGVWDWRAREDGIYLKIKAERGVN</sequence>
<reference key="1">
    <citation type="journal article" date="2000" name="DNA Res.">
        <title>Structural analysis of Arabidopsis thaliana chromosome 3. I. Sequence features of the regions of 4,504,864 bp covered by sixty P1 and TAC clones.</title>
        <authorList>
            <person name="Sato S."/>
            <person name="Nakamura Y."/>
            <person name="Kaneko T."/>
            <person name="Katoh T."/>
            <person name="Asamizu E."/>
            <person name="Tabata S."/>
        </authorList>
    </citation>
    <scope>NUCLEOTIDE SEQUENCE [LARGE SCALE GENOMIC DNA]</scope>
    <source>
        <strain>cv. Columbia</strain>
    </source>
</reference>
<reference key="2">
    <citation type="journal article" date="2017" name="Plant J.">
        <title>Araport11: a complete reannotation of the Arabidopsis thaliana reference genome.</title>
        <authorList>
            <person name="Cheng C.Y."/>
            <person name="Krishnakumar V."/>
            <person name="Chan A.P."/>
            <person name="Thibaud-Nissen F."/>
            <person name="Schobel S."/>
            <person name="Town C.D."/>
        </authorList>
    </citation>
    <scope>GENOME REANNOTATION</scope>
    <source>
        <strain>cv. Columbia</strain>
    </source>
</reference>
<reference key="3">
    <citation type="submission" date="2005-05" db="EMBL/GenBank/DDBJ databases">
        <authorList>
            <person name="Underwood B.A."/>
            <person name="Xiao Y.-L."/>
            <person name="Moskal W.A. Jr."/>
            <person name="Monaghan E.L."/>
            <person name="Wang W."/>
            <person name="Redman J.C."/>
            <person name="Wu H.C."/>
            <person name="Utterback T."/>
            <person name="Town C.D."/>
        </authorList>
    </citation>
    <scope>NUCLEOTIDE SEQUENCE [LARGE SCALE MRNA]</scope>
    <source>
        <strain>cv. Columbia</strain>
    </source>
</reference>
<reference key="4">
    <citation type="journal article" date="1999" name="Plant Mol. Biol.">
        <title>Analysis of Arabidopsis genome sequence reveals a large new gene family in plants.</title>
        <authorList>
            <person name="Ride J.P."/>
            <person name="Davies E.M."/>
            <person name="Franklin F.C.H."/>
            <person name="Marshall D.F."/>
        </authorList>
    </citation>
    <scope>GENE FAMILY</scope>
    <scope>NOMENCLATURE</scope>
    <source>
        <strain>cv. Columbia</strain>
    </source>
</reference>
<name>SPH23_ARATH</name>
<keyword id="KW-0325">Glycoprotein</keyword>
<keyword id="KW-1185">Reference proteome</keyword>
<keyword id="KW-0964">Secreted</keyword>
<keyword id="KW-0713">Self-incompatibility</keyword>
<keyword id="KW-0732">Signal</keyword>
<accession>Q9LW24</accession>
<feature type="signal peptide" evidence="1">
    <location>
        <begin position="1"/>
        <end position="20"/>
    </location>
</feature>
<feature type="chain" id="PRO_5009348613" description="S-protein homolog 23">
    <location>
        <begin position="21"/>
        <end position="122"/>
    </location>
</feature>
<feature type="glycosylation site" description="N-linked (GlcNAc...) asparagine" evidence="2">
    <location>
        <position position="86"/>
    </location>
</feature>
<dbReference type="EMBL" id="AB016889">
    <property type="protein sequence ID" value="BAB01233.1"/>
    <property type="molecule type" value="Genomic_DNA"/>
</dbReference>
<dbReference type="EMBL" id="CP002686">
    <property type="protein sequence ID" value="AEE77226.1"/>
    <property type="molecule type" value="Genomic_DNA"/>
</dbReference>
<dbReference type="EMBL" id="DQ056610">
    <property type="protein sequence ID" value="AAY78758.1"/>
    <property type="molecule type" value="mRNA"/>
</dbReference>
<dbReference type="RefSeq" id="NP_001319651.1">
    <property type="nucleotide sequence ID" value="NM_001338836.1"/>
</dbReference>
<dbReference type="SMR" id="Q9LW24"/>
<dbReference type="STRING" id="3702.Q9LW24"/>
<dbReference type="GlyCosmos" id="Q9LW24">
    <property type="glycosylation" value="1 site, No reported glycans"/>
</dbReference>
<dbReference type="GlyGen" id="Q9LW24">
    <property type="glycosylation" value="1 site"/>
</dbReference>
<dbReference type="PaxDb" id="3702-AT3G26860.2"/>
<dbReference type="ProteomicsDB" id="245341"/>
<dbReference type="EnsemblPlants" id="AT3G26860.2">
    <property type="protein sequence ID" value="AT3G26860.2"/>
    <property type="gene ID" value="AT3G26860"/>
</dbReference>
<dbReference type="GeneID" id="822302"/>
<dbReference type="Gramene" id="AT3G26860.2">
    <property type="protein sequence ID" value="AT3G26860.2"/>
    <property type="gene ID" value="AT3G26860"/>
</dbReference>
<dbReference type="KEGG" id="ath:AT3G26860"/>
<dbReference type="Araport" id="AT3G26860"/>
<dbReference type="TAIR" id="AT3G26860"/>
<dbReference type="HOGENOM" id="CLU_125658_3_2_1"/>
<dbReference type="InParanoid" id="Q9LW24"/>
<dbReference type="OMA" id="HHQNFTA"/>
<dbReference type="PhylomeDB" id="Q9LW24"/>
<dbReference type="PRO" id="PR:Q9LW24"/>
<dbReference type="Proteomes" id="UP000006548">
    <property type="component" value="Chromosome 3"/>
</dbReference>
<dbReference type="ExpressionAtlas" id="Q9LW24">
    <property type="expression patterns" value="baseline and differential"/>
</dbReference>
<dbReference type="GO" id="GO:0005576">
    <property type="term" value="C:extracellular region"/>
    <property type="evidence" value="ECO:0007669"/>
    <property type="project" value="UniProtKB-SubCell"/>
</dbReference>
<dbReference type="GO" id="GO:0060320">
    <property type="term" value="P:rejection of self pollen"/>
    <property type="evidence" value="ECO:0007669"/>
    <property type="project" value="UniProtKB-KW"/>
</dbReference>
<dbReference type="InterPro" id="IPR010264">
    <property type="entry name" value="Self-incomp_S1"/>
</dbReference>
<dbReference type="PANTHER" id="PTHR31232">
    <property type="match status" value="1"/>
</dbReference>
<dbReference type="PANTHER" id="PTHR31232:SF54">
    <property type="entry name" value="S-PROTEIN HOMOLOG-RELATED"/>
    <property type="match status" value="1"/>
</dbReference>
<dbReference type="Pfam" id="PF05938">
    <property type="entry name" value="Self-incomp_S1"/>
    <property type="match status" value="1"/>
</dbReference>
<protein>
    <recommendedName>
        <fullName evidence="3">S-protein homolog 23</fullName>
    </recommendedName>
</protein>